<gene>
    <name evidence="1" type="primary">rpsQ</name>
    <name type="ordered locus">MAP_4170</name>
</gene>
<keyword id="KW-1185">Reference proteome</keyword>
<keyword id="KW-0687">Ribonucleoprotein</keyword>
<keyword id="KW-0689">Ribosomal protein</keyword>
<keyword id="KW-0694">RNA-binding</keyword>
<keyword id="KW-0699">rRNA-binding</keyword>
<reference key="1">
    <citation type="journal article" date="2005" name="Proc. Natl. Acad. Sci. U.S.A.">
        <title>The complete genome sequence of Mycobacterium avium subspecies paratuberculosis.</title>
        <authorList>
            <person name="Li L."/>
            <person name="Bannantine J.P."/>
            <person name="Zhang Q."/>
            <person name="Amonsin A."/>
            <person name="May B.J."/>
            <person name="Alt D."/>
            <person name="Banerji N."/>
            <person name="Kanjilal S."/>
            <person name="Kapur V."/>
        </authorList>
    </citation>
    <scope>NUCLEOTIDE SEQUENCE [LARGE SCALE GENOMIC DNA]</scope>
    <source>
        <strain>ATCC BAA-968 / K-10</strain>
    </source>
</reference>
<accession>Q73SA5</accession>
<name>RS17_MYCPA</name>
<comment type="function">
    <text evidence="1">One of the primary rRNA binding proteins, it binds specifically to the 5'-end of 16S ribosomal RNA.</text>
</comment>
<comment type="subunit">
    <text evidence="1">Part of the 30S ribosomal subunit.</text>
</comment>
<comment type="similarity">
    <text evidence="1">Belongs to the universal ribosomal protein uS17 family.</text>
</comment>
<protein>
    <recommendedName>
        <fullName evidence="1">Small ribosomal subunit protein uS17</fullName>
    </recommendedName>
    <alternativeName>
        <fullName evidence="3">30S ribosomal protein S17</fullName>
    </alternativeName>
</protein>
<sequence>MMAEAKKAAPKKAATAASKDADAKGPKHTPPNPKVRGRRKTRIGYVVSDKMQKTIVVELEDRVKHPLYGKIIRTTKKVKAHDENSIAGIGDRVSLMETRPTSATKRWRLVEILEKAK</sequence>
<proteinExistence type="inferred from homology"/>
<organism>
    <name type="scientific">Mycolicibacterium paratuberculosis (strain ATCC BAA-968 / K-10)</name>
    <name type="common">Mycobacterium paratuberculosis</name>
    <dbReference type="NCBI Taxonomy" id="262316"/>
    <lineage>
        <taxon>Bacteria</taxon>
        <taxon>Bacillati</taxon>
        <taxon>Actinomycetota</taxon>
        <taxon>Actinomycetes</taxon>
        <taxon>Mycobacteriales</taxon>
        <taxon>Mycobacteriaceae</taxon>
        <taxon>Mycobacterium</taxon>
        <taxon>Mycobacterium avium complex (MAC)</taxon>
    </lineage>
</organism>
<dbReference type="EMBL" id="AE016958">
    <property type="protein sequence ID" value="AAS06720.1"/>
    <property type="molecule type" value="Genomic_DNA"/>
</dbReference>
<dbReference type="SMR" id="Q73SA5"/>
<dbReference type="STRING" id="262316.MAP_4170"/>
<dbReference type="KEGG" id="mpa:MAP_4170"/>
<dbReference type="eggNOG" id="COG0186">
    <property type="taxonomic scope" value="Bacteria"/>
</dbReference>
<dbReference type="HOGENOM" id="CLU_073626_1_0_11"/>
<dbReference type="Proteomes" id="UP000000580">
    <property type="component" value="Chromosome"/>
</dbReference>
<dbReference type="GO" id="GO:0022627">
    <property type="term" value="C:cytosolic small ribosomal subunit"/>
    <property type="evidence" value="ECO:0007669"/>
    <property type="project" value="TreeGrafter"/>
</dbReference>
<dbReference type="GO" id="GO:0019843">
    <property type="term" value="F:rRNA binding"/>
    <property type="evidence" value="ECO:0007669"/>
    <property type="project" value="UniProtKB-UniRule"/>
</dbReference>
<dbReference type="GO" id="GO:0003735">
    <property type="term" value="F:structural constituent of ribosome"/>
    <property type="evidence" value="ECO:0007669"/>
    <property type="project" value="InterPro"/>
</dbReference>
<dbReference type="GO" id="GO:0006412">
    <property type="term" value="P:translation"/>
    <property type="evidence" value="ECO:0007669"/>
    <property type="project" value="UniProtKB-UniRule"/>
</dbReference>
<dbReference type="CDD" id="cd00364">
    <property type="entry name" value="Ribosomal_uS17"/>
    <property type="match status" value="1"/>
</dbReference>
<dbReference type="FunFam" id="2.40.50.140:FF:000026">
    <property type="entry name" value="30S ribosomal protein S17"/>
    <property type="match status" value="1"/>
</dbReference>
<dbReference type="Gene3D" id="2.40.50.140">
    <property type="entry name" value="Nucleic acid-binding proteins"/>
    <property type="match status" value="1"/>
</dbReference>
<dbReference type="HAMAP" id="MF_01345_B">
    <property type="entry name" value="Ribosomal_uS17_B"/>
    <property type="match status" value="1"/>
</dbReference>
<dbReference type="InterPro" id="IPR012340">
    <property type="entry name" value="NA-bd_OB-fold"/>
</dbReference>
<dbReference type="InterPro" id="IPR000266">
    <property type="entry name" value="Ribosomal_uS17"/>
</dbReference>
<dbReference type="InterPro" id="IPR019984">
    <property type="entry name" value="Ribosomal_uS17_bact/chlr"/>
</dbReference>
<dbReference type="NCBIfam" id="NF004123">
    <property type="entry name" value="PRK05610.1"/>
    <property type="match status" value="1"/>
</dbReference>
<dbReference type="NCBIfam" id="TIGR03635">
    <property type="entry name" value="uS17_bact"/>
    <property type="match status" value="1"/>
</dbReference>
<dbReference type="PANTHER" id="PTHR10744">
    <property type="entry name" value="40S RIBOSOMAL PROTEIN S11 FAMILY MEMBER"/>
    <property type="match status" value="1"/>
</dbReference>
<dbReference type="PANTHER" id="PTHR10744:SF1">
    <property type="entry name" value="SMALL RIBOSOMAL SUBUNIT PROTEIN US17M"/>
    <property type="match status" value="1"/>
</dbReference>
<dbReference type="Pfam" id="PF00366">
    <property type="entry name" value="Ribosomal_S17"/>
    <property type="match status" value="1"/>
</dbReference>
<dbReference type="PRINTS" id="PR00973">
    <property type="entry name" value="RIBOSOMALS17"/>
</dbReference>
<dbReference type="SUPFAM" id="SSF50249">
    <property type="entry name" value="Nucleic acid-binding proteins"/>
    <property type="match status" value="1"/>
</dbReference>
<feature type="chain" id="PRO_0000233507" description="Small ribosomal subunit protein uS17">
    <location>
        <begin position="1"/>
        <end position="117"/>
    </location>
</feature>
<feature type="region of interest" description="Disordered" evidence="2">
    <location>
        <begin position="1"/>
        <end position="42"/>
    </location>
</feature>
<evidence type="ECO:0000255" key="1">
    <source>
        <dbReference type="HAMAP-Rule" id="MF_01345"/>
    </source>
</evidence>
<evidence type="ECO:0000256" key="2">
    <source>
        <dbReference type="SAM" id="MobiDB-lite"/>
    </source>
</evidence>
<evidence type="ECO:0000305" key="3"/>